<evidence type="ECO:0000255" key="1">
    <source>
        <dbReference type="HAMAP-Rule" id="MF_00362"/>
    </source>
</evidence>
<evidence type="ECO:0000305" key="2"/>
<protein>
    <recommendedName>
        <fullName evidence="1">Large ribosomal subunit protein uL10</fullName>
    </recommendedName>
    <alternativeName>
        <fullName evidence="2">50S ribosomal protein L10</fullName>
    </alternativeName>
</protein>
<accession>B2GIJ3</accession>
<dbReference type="EMBL" id="AP009152">
    <property type="protein sequence ID" value="BAG28942.1"/>
    <property type="molecule type" value="Genomic_DNA"/>
</dbReference>
<dbReference type="RefSeq" id="WP_012397668.1">
    <property type="nucleotide sequence ID" value="NZ_VECX01000001.1"/>
</dbReference>
<dbReference type="SMR" id="B2GIJ3"/>
<dbReference type="STRING" id="378753.KRH_05950"/>
<dbReference type="KEGG" id="krh:KRH_05950"/>
<dbReference type="eggNOG" id="COG0244">
    <property type="taxonomic scope" value="Bacteria"/>
</dbReference>
<dbReference type="HOGENOM" id="CLU_092227_1_0_11"/>
<dbReference type="OrthoDB" id="3186107at2"/>
<dbReference type="Proteomes" id="UP000008838">
    <property type="component" value="Chromosome"/>
</dbReference>
<dbReference type="GO" id="GO:0015934">
    <property type="term" value="C:large ribosomal subunit"/>
    <property type="evidence" value="ECO:0007669"/>
    <property type="project" value="InterPro"/>
</dbReference>
<dbReference type="GO" id="GO:0070180">
    <property type="term" value="F:large ribosomal subunit rRNA binding"/>
    <property type="evidence" value="ECO:0007669"/>
    <property type="project" value="UniProtKB-UniRule"/>
</dbReference>
<dbReference type="GO" id="GO:0003735">
    <property type="term" value="F:structural constituent of ribosome"/>
    <property type="evidence" value="ECO:0007669"/>
    <property type="project" value="InterPro"/>
</dbReference>
<dbReference type="GO" id="GO:0006412">
    <property type="term" value="P:translation"/>
    <property type="evidence" value="ECO:0007669"/>
    <property type="project" value="UniProtKB-UniRule"/>
</dbReference>
<dbReference type="CDD" id="cd05797">
    <property type="entry name" value="Ribosomal_L10"/>
    <property type="match status" value="1"/>
</dbReference>
<dbReference type="Gene3D" id="3.30.70.1730">
    <property type="match status" value="1"/>
</dbReference>
<dbReference type="Gene3D" id="6.10.250.290">
    <property type="match status" value="1"/>
</dbReference>
<dbReference type="HAMAP" id="MF_00362">
    <property type="entry name" value="Ribosomal_uL10"/>
    <property type="match status" value="1"/>
</dbReference>
<dbReference type="InterPro" id="IPR001790">
    <property type="entry name" value="Ribosomal_uL10"/>
</dbReference>
<dbReference type="InterPro" id="IPR043141">
    <property type="entry name" value="Ribosomal_uL10-like_sf"/>
</dbReference>
<dbReference type="InterPro" id="IPR022973">
    <property type="entry name" value="Ribosomal_uL10_bac"/>
</dbReference>
<dbReference type="InterPro" id="IPR047865">
    <property type="entry name" value="Ribosomal_uL10_bac_type"/>
</dbReference>
<dbReference type="InterPro" id="IPR002363">
    <property type="entry name" value="Ribosomal_uL10_CS_bac"/>
</dbReference>
<dbReference type="NCBIfam" id="NF000955">
    <property type="entry name" value="PRK00099.1-1"/>
    <property type="match status" value="1"/>
</dbReference>
<dbReference type="PANTHER" id="PTHR11560">
    <property type="entry name" value="39S RIBOSOMAL PROTEIN L10, MITOCHONDRIAL"/>
    <property type="match status" value="1"/>
</dbReference>
<dbReference type="Pfam" id="PF00466">
    <property type="entry name" value="Ribosomal_L10"/>
    <property type="match status" value="1"/>
</dbReference>
<dbReference type="SUPFAM" id="SSF160369">
    <property type="entry name" value="Ribosomal protein L10-like"/>
    <property type="match status" value="1"/>
</dbReference>
<dbReference type="PROSITE" id="PS01109">
    <property type="entry name" value="RIBOSOMAL_L10"/>
    <property type="match status" value="1"/>
</dbReference>
<reference key="1">
    <citation type="journal article" date="2008" name="J. Bacteriol.">
        <title>Complete genome sequence of the soil actinomycete Kocuria rhizophila.</title>
        <authorList>
            <person name="Takarada H."/>
            <person name="Sekine M."/>
            <person name="Kosugi H."/>
            <person name="Matsuo Y."/>
            <person name="Fujisawa T."/>
            <person name="Omata S."/>
            <person name="Kishi E."/>
            <person name="Shimizu A."/>
            <person name="Tsukatani N."/>
            <person name="Tanikawa S."/>
            <person name="Fujita N."/>
            <person name="Harayama S."/>
        </authorList>
    </citation>
    <scope>NUCLEOTIDE SEQUENCE [LARGE SCALE GENOMIC DNA]</scope>
    <source>
        <strain>ATCC 9341 / DSM 348 / NBRC 103217 / DC2201</strain>
    </source>
</reference>
<feature type="chain" id="PRO_1000120976" description="Large ribosomal subunit protein uL10">
    <location>
        <begin position="1"/>
        <end position="177"/>
    </location>
</feature>
<organism>
    <name type="scientific">Kocuria rhizophila (strain ATCC 9341 / DSM 348 / NBRC 103217 / DC2201)</name>
    <dbReference type="NCBI Taxonomy" id="378753"/>
    <lineage>
        <taxon>Bacteria</taxon>
        <taxon>Bacillati</taxon>
        <taxon>Actinomycetota</taxon>
        <taxon>Actinomycetes</taxon>
        <taxon>Micrococcales</taxon>
        <taxon>Micrococcaceae</taxon>
        <taxon>Kocuria</taxon>
    </lineage>
</organism>
<comment type="function">
    <text evidence="1">Forms part of the ribosomal stalk, playing a central role in the interaction of the ribosome with GTP-bound translation factors.</text>
</comment>
<comment type="subunit">
    <text evidence="1">Part of the ribosomal stalk of the 50S ribosomal subunit. The N-terminus interacts with L11 and the large rRNA to form the base of the stalk. The C-terminus forms an elongated spine to which L12 dimers bind in a sequential fashion forming a multimeric L10(L12)X complex.</text>
</comment>
<comment type="similarity">
    <text evidence="1">Belongs to the universal ribosomal protein uL10 family.</text>
</comment>
<gene>
    <name evidence="1" type="primary">rplJ</name>
    <name type="ordered locus">KRH_05950</name>
</gene>
<proteinExistence type="inferred from homology"/>
<sequence length="177" mass="18589">MANPEKAAAVAELKDLFSNSHAAVLTEYRGLTVAQLKTLRRALGENAEYAVVKNTLTAIAARESGIEAFEGQLNGPSAIAFVSGDAVEAAKSLRDFAKDNPQLVVKGGYLDGVAMDENEIKKLADLESREVLLSKVAGAAKASMSKAAALFQAPLSKTVRTADALRAKLDEQGENAA</sequence>
<name>RL10_KOCRD</name>
<keyword id="KW-1185">Reference proteome</keyword>
<keyword id="KW-0687">Ribonucleoprotein</keyword>
<keyword id="KW-0689">Ribosomal protein</keyword>
<keyword id="KW-0694">RNA-binding</keyword>
<keyword id="KW-0699">rRNA-binding</keyword>